<reference key="1">
    <citation type="journal article" date="2001" name="Science">
        <title>Comparative genomics of Listeria species.</title>
        <authorList>
            <person name="Glaser P."/>
            <person name="Frangeul L."/>
            <person name="Buchrieser C."/>
            <person name="Rusniok C."/>
            <person name="Amend A."/>
            <person name="Baquero F."/>
            <person name="Berche P."/>
            <person name="Bloecker H."/>
            <person name="Brandt P."/>
            <person name="Chakraborty T."/>
            <person name="Charbit A."/>
            <person name="Chetouani F."/>
            <person name="Couve E."/>
            <person name="de Daruvar A."/>
            <person name="Dehoux P."/>
            <person name="Domann E."/>
            <person name="Dominguez-Bernal G."/>
            <person name="Duchaud E."/>
            <person name="Durant L."/>
            <person name="Dussurget O."/>
            <person name="Entian K.-D."/>
            <person name="Fsihi H."/>
            <person name="Garcia-del Portillo F."/>
            <person name="Garrido P."/>
            <person name="Gautier L."/>
            <person name="Goebel W."/>
            <person name="Gomez-Lopez N."/>
            <person name="Hain T."/>
            <person name="Hauf J."/>
            <person name="Jackson D."/>
            <person name="Jones L.-M."/>
            <person name="Kaerst U."/>
            <person name="Kreft J."/>
            <person name="Kuhn M."/>
            <person name="Kunst F."/>
            <person name="Kurapkat G."/>
            <person name="Madueno E."/>
            <person name="Maitournam A."/>
            <person name="Mata Vicente J."/>
            <person name="Ng E."/>
            <person name="Nedjari H."/>
            <person name="Nordsiek G."/>
            <person name="Novella S."/>
            <person name="de Pablos B."/>
            <person name="Perez-Diaz J.-C."/>
            <person name="Purcell R."/>
            <person name="Remmel B."/>
            <person name="Rose M."/>
            <person name="Schlueter T."/>
            <person name="Simoes N."/>
            <person name="Tierrez A."/>
            <person name="Vazquez-Boland J.-A."/>
            <person name="Voss H."/>
            <person name="Wehland J."/>
            <person name="Cossart P."/>
        </authorList>
    </citation>
    <scope>NUCLEOTIDE SEQUENCE [LARGE SCALE GENOMIC DNA]</scope>
    <source>
        <strain>ATCC BAA-679 / EGD-e</strain>
    </source>
</reference>
<organism>
    <name type="scientific">Listeria monocytogenes serovar 1/2a (strain ATCC BAA-679 / EGD-e)</name>
    <dbReference type="NCBI Taxonomy" id="169963"/>
    <lineage>
        <taxon>Bacteria</taxon>
        <taxon>Bacillati</taxon>
        <taxon>Bacillota</taxon>
        <taxon>Bacilli</taxon>
        <taxon>Bacillales</taxon>
        <taxon>Listeriaceae</taxon>
        <taxon>Listeria</taxon>
    </lineage>
</organism>
<evidence type="ECO:0000255" key="1">
    <source>
        <dbReference type="HAMAP-Rule" id="MF_00362"/>
    </source>
</evidence>
<evidence type="ECO:0000305" key="2"/>
<name>RL10_LISMO</name>
<dbReference type="EMBL" id="AL591974">
    <property type="protein sequence ID" value="CAD00777.1"/>
    <property type="molecule type" value="Genomic_DNA"/>
</dbReference>
<dbReference type="PIR" id="AC1106">
    <property type="entry name" value="AC1106"/>
</dbReference>
<dbReference type="RefSeq" id="NP_463781.1">
    <property type="nucleotide sequence ID" value="NC_003210.1"/>
</dbReference>
<dbReference type="RefSeq" id="WP_003732833.1">
    <property type="nucleotide sequence ID" value="NZ_CP149495.1"/>
</dbReference>
<dbReference type="SMR" id="P66042"/>
<dbReference type="STRING" id="169963.gene:17592901"/>
<dbReference type="PaxDb" id="169963-lmo0250"/>
<dbReference type="EnsemblBacteria" id="CAD00777">
    <property type="protein sequence ID" value="CAD00777"/>
    <property type="gene ID" value="CAD00777"/>
</dbReference>
<dbReference type="GeneID" id="93233732"/>
<dbReference type="GeneID" id="987306"/>
<dbReference type="KEGG" id="lmo:lmo0250"/>
<dbReference type="PATRIC" id="fig|169963.11.peg.258"/>
<dbReference type="eggNOG" id="COG0244">
    <property type="taxonomic scope" value="Bacteria"/>
</dbReference>
<dbReference type="HOGENOM" id="CLU_092227_2_0_9"/>
<dbReference type="OrthoDB" id="9808307at2"/>
<dbReference type="PhylomeDB" id="P66042"/>
<dbReference type="BioCyc" id="LMON169963:LMO0250-MONOMER"/>
<dbReference type="Proteomes" id="UP000000817">
    <property type="component" value="Chromosome"/>
</dbReference>
<dbReference type="GO" id="GO:0022625">
    <property type="term" value="C:cytosolic large ribosomal subunit"/>
    <property type="evidence" value="ECO:0000318"/>
    <property type="project" value="GO_Central"/>
</dbReference>
<dbReference type="GO" id="GO:0070180">
    <property type="term" value="F:large ribosomal subunit rRNA binding"/>
    <property type="evidence" value="ECO:0007669"/>
    <property type="project" value="UniProtKB-UniRule"/>
</dbReference>
<dbReference type="GO" id="GO:0003735">
    <property type="term" value="F:structural constituent of ribosome"/>
    <property type="evidence" value="ECO:0000318"/>
    <property type="project" value="GO_Central"/>
</dbReference>
<dbReference type="GO" id="GO:0006412">
    <property type="term" value="P:translation"/>
    <property type="evidence" value="ECO:0000318"/>
    <property type="project" value="GO_Central"/>
</dbReference>
<dbReference type="CDD" id="cd05797">
    <property type="entry name" value="Ribosomal_L10"/>
    <property type="match status" value="1"/>
</dbReference>
<dbReference type="FunFam" id="3.30.70.1730:FF:000001">
    <property type="entry name" value="50S ribosomal protein L10"/>
    <property type="match status" value="1"/>
</dbReference>
<dbReference type="Gene3D" id="3.30.70.1730">
    <property type="match status" value="1"/>
</dbReference>
<dbReference type="HAMAP" id="MF_00362">
    <property type="entry name" value="Ribosomal_uL10"/>
    <property type="match status" value="1"/>
</dbReference>
<dbReference type="InterPro" id="IPR001790">
    <property type="entry name" value="Ribosomal_uL10"/>
</dbReference>
<dbReference type="InterPro" id="IPR043141">
    <property type="entry name" value="Ribosomal_uL10-like_sf"/>
</dbReference>
<dbReference type="InterPro" id="IPR022973">
    <property type="entry name" value="Ribosomal_uL10_bac"/>
</dbReference>
<dbReference type="InterPro" id="IPR047865">
    <property type="entry name" value="Ribosomal_uL10_bac_type"/>
</dbReference>
<dbReference type="InterPro" id="IPR002363">
    <property type="entry name" value="Ribosomal_uL10_CS_bac"/>
</dbReference>
<dbReference type="NCBIfam" id="NF000955">
    <property type="entry name" value="PRK00099.1-1"/>
    <property type="match status" value="1"/>
</dbReference>
<dbReference type="PANTHER" id="PTHR11560">
    <property type="entry name" value="39S RIBOSOMAL PROTEIN L10, MITOCHONDRIAL"/>
    <property type="match status" value="1"/>
</dbReference>
<dbReference type="Pfam" id="PF00466">
    <property type="entry name" value="Ribosomal_L10"/>
    <property type="match status" value="1"/>
</dbReference>
<dbReference type="SUPFAM" id="SSF160369">
    <property type="entry name" value="Ribosomal protein L10-like"/>
    <property type="match status" value="1"/>
</dbReference>
<dbReference type="PROSITE" id="PS01109">
    <property type="entry name" value="RIBOSOMAL_L10"/>
    <property type="match status" value="1"/>
</dbReference>
<protein>
    <recommendedName>
        <fullName evidence="1">Large ribosomal subunit protein uL10</fullName>
    </recommendedName>
    <alternativeName>
        <fullName evidence="2">50S ribosomal protein L10</fullName>
    </alternativeName>
</protein>
<gene>
    <name evidence="1" type="primary">rplJ</name>
    <name type="ordered locus">lmo0250</name>
</gene>
<feature type="chain" id="PRO_0000154659" description="Large ribosomal subunit protein uL10">
    <location>
        <begin position="1"/>
        <end position="166"/>
    </location>
</feature>
<accession>P66042</accession>
<accession>Q92F25</accession>
<sequence length="166" mass="17693">MSKVLEAKQSAVEEIKTKLSASASTVIVDYRGLNVGEITDLRKQLRDAGIEFKVYKNSLTRRAVEANGYEGLEGALTGPNAIAFSNEDVVAPAKILNDFAKDHEALEIKAGVIEGKVASLEEIKALATLPSREGLLSMLCNVLQAPVRGLAIATKAVADQKEGQEA</sequence>
<proteinExistence type="inferred from homology"/>
<comment type="function">
    <text evidence="1">Forms part of the ribosomal stalk, playing a central role in the interaction of the ribosome with GTP-bound translation factors.</text>
</comment>
<comment type="subunit">
    <text evidence="1">Part of the ribosomal stalk of the 50S ribosomal subunit. The N-terminus interacts with L11 and the large rRNA to form the base of the stalk. The C-terminus forms an elongated spine to which L12 dimers bind in a sequential fashion forming a multimeric L10(L12)X complex.</text>
</comment>
<comment type="similarity">
    <text evidence="1">Belongs to the universal ribosomal protein uL10 family.</text>
</comment>
<keyword id="KW-1185">Reference proteome</keyword>
<keyword id="KW-0687">Ribonucleoprotein</keyword>
<keyword id="KW-0689">Ribosomal protein</keyword>
<keyword id="KW-0694">RNA-binding</keyword>
<keyword id="KW-0699">rRNA-binding</keyword>